<sequence>MELLKGNAVNLNDTAYYNNRELSWLAFNERVLQEAQDANNPLLERLKFISIFSSNLDEFFMVRVAGLKDQVSAGFNQPENKAGLTPKKQLNKIAIKAHALMTVQYDTFKNYVLPALELEGIERLTFNDLTKEQREFIEEYFDEQIFPVLTPVAIDAYRPFPMLLNKSLNLATLLYDEKQAEEENRTKLGIVQVPSLLERFIILPSEGQKHKFILLEDVISSFTHKLFTGYTVSSVTRFRITRNADLTIHEEGARDLLKVIEKELKKRKWGAAVRLEVGKEHIDERVLALLYEVLEVKDEDVYIMDGPLDLTCLFSLYKKLAPLYEHLVYPALIPQPPQDLGDEEDVFEKAIEHDILLHHPFESFQPVVDFVRDAADDPNVLAIKQTLYRVSGDSPIIQALKIAAEKGKQVTVLVELKARFDEENNVHWAKELEQAGCHVIYGVSHLKTHSKITLVVRRKNGKIERFVHLGTGNYNDATAKLYTDFGYITSRKDFGVDATNFFNYLSGYTTKPHFHHLSVAPFDIREQFMDLIDEEIRYHRQYGNGYIIAKMNSLTDKPLIKKMYEASQAGVKVELIVRGTCCLRPGIPNVSENIRVVSVVGRYLEHSRIYYFHHNGEEKIYLSSADLMTRNMEKRVEISFPILDIEMKARIKAILQLILADNVKTREQNKDGDYYYVINGSTEEIDSQVKLFKMAYQNTDAE</sequence>
<proteinExistence type="inferred from homology"/>
<accession>Q819I5</accession>
<keyword id="KW-0067">ATP-binding</keyword>
<keyword id="KW-0418">Kinase</keyword>
<keyword id="KW-0460">Magnesium</keyword>
<keyword id="KW-0479">Metal-binding</keyword>
<keyword id="KW-0547">Nucleotide-binding</keyword>
<keyword id="KW-0597">Phosphoprotein</keyword>
<keyword id="KW-1185">Reference proteome</keyword>
<keyword id="KW-0808">Transferase</keyword>
<protein>
    <recommendedName>
        <fullName evidence="1">Polyphosphate kinase</fullName>
        <ecNumber evidence="1">2.7.4.1</ecNumber>
    </recommendedName>
    <alternativeName>
        <fullName evidence="1">ATP-polyphosphate phosphotransferase</fullName>
    </alternativeName>
    <alternativeName>
        <fullName evidence="1">Polyphosphoric acid kinase</fullName>
    </alternativeName>
</protein>
<name>PPK1_BACCR</name>
<comment type="function">
    <text evidence="1">Catalyzes the reversible transfer of the terminal phosphate of ATP to form a long-chain polyphosphate (polyP).</text>
</comment>
<comment type="catalytic activity">
    <reaction evidence="1">
        <text>[phosphate](n) + ATP = [phosphate](n+1) + ADP</text>
        <dbReference type="Rhea" id="RHEA:19573"/>
        <dbReference type="Rhea" id="RHEA-COMP:9859"/>
        <dbReference type="Rhea" id="RHEA-COMP:14280"/>
        <dbReference type="ChEBI" id="CHEBI:16838"/>
        <dbReference type="ChEBI" id="CHEBI:30616"/>
        <dbReference type="ChEBI" id="CHEBI:456216"/>
        <dbReference type="EC" id="2.7.4.1"/>
    </reaction>
</comment>
<comment type="cofactor">
    <cofactor evidence="1">
        <name>Mg(2+)</name>
        <dbReference type="ChEBI" id="CHEBI:18420"/>
    </cofactor>
</comment>
<comment type="PTM">
    <text evidence="1">An intermediate of this reaction is the autophosphorylated ppk in which a phosphate is covalently linked to a histidine residue through a N-P bond.</text>
</comment>
<comment type="similarity">
    <text evidence="1">Belongs to the polyphosphate kinase 1 (PPK1) family.</text>
</comment>
<dbReference type="EC" id="2.7.4.1" evidence="1"/>
<dbReference type="EMBL" id="AE016877">
    <property type="protein sequence ID" value="AAP10913.1"/>
    <property type="molecule type" value="Genomic_DNA"/>
</dbReference>
<dbReference type="RefSeq" id="NP_833712.1">
    <property type="nucleotide sequence ID" value="NC_004722.1"/>
</dbReference>
<dbReference type="RefSeq" id="WP_000421678.1">
    <property type="nucleotide sequence ID" value="NZ_CP138336.1"/>
</dbReference>
<dbReference type="SMR" id="Q819I5"/>
<dbReference type="STRING" id="226900.BC_3993"/>
<dbReference type="KEGG" id="bce:BC3993"/>
<dbReference type="PATRIC" id="fig|226900.8.peg.4121"/>
<dbReference type="HOGENOM" id="CLU_009678_5_0_9"/>
<dbReference type="OrthoDB" id="9761456at2"/>
<dbReference type="Proteomes" id="UP000001417">
    <property type="component" value="Chromosome"/>
</dbReference>
<dbReference type="GO" id="GO:0016020">
    <property type="term" value="C:membrane"/>
    <property type="evidence" value="ECO:0000318"/>
    <property type="project" value="GO_Central"/>
</dbReference>
<dbReference type="GO" id="GO:0009358">
    <property type="term" value="C:polyphosphate kinase complex"/>
    <property type="evidence" value="ECO:0007669"/>
    <property type="project" value="InterPro"/>
</dbReference>
<dbReference type="GO" id="GO:0005524">
    <property type="term" value="F:ATP binding"/>
    <property type="evidence" value="ECO:0007669"/>
    <property type="project" value="UniProtKB-KW"/>
</dbReference>
<dbReference type="GO" id="GO:0046872">
    <property type="term" value="F:metal ion binding"/>
    <property type="evidence" value="ECO:0007669"/>
    <property type="project" value="UniProtKB-KW"/>
</dbReference>
<dbReference type="GO" id="GO:0008976">
    <property type="term" value="F:polyphosphate kinase activity"/>
    <property type="evidence" value="ECO:0000318"/>
    <property type="project" value="GO_Central"/>
</dbReference>
<dbReference type="GO" id="GO:0006799">
    <property type="term" value="P:polyphosphate biosynthetic process"/>
    <property type="evidence" value="ECO:0000318"/>
    <property type="project" value="GO_Central"/>
</dbReference>
<dbReference type="CDD" id="cd09165">
    <property type="entry name" value="PLDc_PaPPK1_C1_like"/>
    <property type="match status" value="1"/>
</dbReference>
<dbReference type="CDD" id="cd09168">
    <property type="entry name" value="PLDc_PaPPK1_C2_like"/>
    <property type="match status" value="1"/>
</dbReference>
<dbReference type="Gene3D" id="3.30.870.10">
    <property type="entry name" value="Endonuclease Chain A"/>
    <property type="match status" value="2"/>
</dbReference>
<dbReference type="Gene3D" id="3.30.1840.10">
    <property type="entry name" value="Polyphosphate kinase middle domain"/>
    <property type="match status" value="1"/>
</dbReference>
<dbReference type="Gene3D" id="1.20.58.310">
    <property type="entry name" value="Polyphosphate kinase N-terminal domain"/>
    <property type="match status" value="1"/>
</dbReference>
<dbReference type="HAMAP" id="MF_00347">
    <property type="entry name" value="Polyphosphate_kinase"/>
    <property type="match status" value="1"/>
</dbReference>
<dbReference type="InterPro" id="IPR003414">
    <property type="entry name" value="PP_kinase"/>
</dbReference>
<dbReference type="InterPro" id="IPR041108">
    <property type="entry name" value="PP_kinase_C_1"/>
</dbReference>
<dbReference type="InterPro" id="IPR024953">
    <property type="entry name" value="PP_kinase_middle"/>
</dbReference>
<dbReference type="InterPro" id="IPR036830">
    <property type="entry name" value="PP_kinase_middle_dom_sf"/>
</dbReference>
<dbReference type="InterPro" id="IPR025200">
    <property type="entry name" value="PPK_C_dom2"/>
</dbReference>
<dbReference type="InterPro" id="IPR025198">
    <property type="entry name" value="PPK_N_dom"/>
</dbReference>
<dbReference type="InterPro" id="IPR036832">
    <property type="entry name" value="PPK_N_dom_sf"/>
</dbReference>
<dbReference type="NCBIfam" id="TIGR03705">
    <property type="entry name" value="poly_P_kin"/>
    <property type="match status" value="1"/>
</dbReference>
<dbReference type="NCBIfam" id="NF003917">
    <property type="entry name" value="PRK05443.1-1"/>
    <property type="match status" value="1"/>
</dbReference>
<dbReference type="NCBIfam" id="NF003918">
    <property type="entry name" value="PRK05443.1-2"/>
    <property type="match status" value="1"/>
</dbReference>
<dbReference type="NCBIfam" id="NF003920">
    <property type="entry name" value="PRK05443.2-1"/>
    <property type="match status" value="1"/>
</dbReference>
<dbReference type="NCBIfam" id="NF003921">
    <property type="entry name" value="PRK05443.2-2"/>
    <property type="match status" value="1"/>
</dbReference>
<dbReference type="PANTHER" id="PTHR30218">
    <property type="entry name" value="POLYPHOSPHATE KINASE"/>
    <property type="match status" value="1"/>
</dbReference>
<dbReference type="PANTHER" id="PTHR30218:SF0">
    <property type="entry name" value="POLYPHOSPHATE KINASE"/>
    <property type="match status" value="1"/>
</dbReference>
<dbReference type="Pfam" id="PF02503">
    <property type="entry name" value="PP_kinase"/>
    <property type="match status" value="1"/>
</dbReference>
<dbReference type="Pfam" id="PF13090">
    <property type="entry name" value="PP_kinase_C"/>
    <property type="match status" value="1"/>
</dbReference>
<dbReference type="Pfam" id="PF17941">
    <property type="entry name" value="PP_kinase_C_1"/>
    <property type="match status" value="1"/>
</dbReference>
<dbReference type="Pfam" id="PF13089">
    <property type="entry name" value="PP_kinase_N"/>
    <property type="match status" value="1"/>
</dbReference>
<dbReference type="PIRSF" id="PIRSF015589">
    <property type="entry name" value="PP_kinase"/>
    <property type="match status" value="1"/>
</dbReference>
<dbReference type="SUPFAM" id="SSF56024">
    <property type="entry name" value="Phospholipase D/nuclease"/>
    <property type="match status" value="2"/>
</dbReference>
<dbReference type="SUPFAM" id="SSF143724">
    <property type="entry name" value="PHP14-like"/>
    <property type="match status" value="1"/>
</dbReference>
<dbReference type="SUPFAM" id="SSF140356">
    <property type="entry name" value="PPK N-terminal domain-like"/>
    <property type="match status" value="1"/>
</dbReference>
<reference key="1">
    <citation type="journal article" date="2003" name="Nature">
        <title>Genome sequence of Bacillus cereus and comparative analysis with Bacillus anthracis.</title>
        <authorList>
            <person name="Ivanova N."/>
            <person name="Sorokin A."/>
            <person name="Anderson I."/>
            <person name="Galleron N."/>
            <person name="Candelon B."/>
            <person name="Kapatral V."/>
            <person name="Bhattacharyya A."/>
            <person name="Reznik G."/>
            <person name="Mikhailova N."/>
            <person name="Lapidus A."/>
            <person name="Chu L."/>
            <person name="Mazur M."/>
            <person name="Goltsman E."/>
            <person name="Larsen N."/>
            <person name="D'Souza M."/>
            <person name="Walunas T."/>
            <person name="Grechkin Y."/>
            <person name="Pusch G."/>
            <person name="Haselkorn R."/>
            <person name="Fonstein M."/>
            <person name="Ehrlich S.D."/>
            <person name="Overbeek R."/>
            <person name="Kyrpides N.C."/>
        </authorList>
    </citation>
    <scope>NUCLEOTIDE SEQUENCE [LARGE SCALE GENOMIC DNA]</scope>
    <source>
        <strain>ATCC 14579 / DSM 31 / CCUG 7414 / JCM 2152 / NBRC 15305 / NCIMB 9373 / NCTC 2599 / NRRL B-3711</strain>
    </source>
</reference>
<organism>
    <name type="scientific">Bacillus cereus (strain ATCC 14579 / DSM 31 / CCUG 7414 / JCM 2152 / NBRC 15305 / NCIMB 9373 / NCTC 2599 / NRRL B-3711)</name>
    <dbReference type="NCBI Taxonomy" id="226900"/>
    <lineage>
        <taxon>Bacteria</taxon>
        <taxon>Bacillati</taxon>
        <taxon>Bacillota</taxon>
        <taxon>Bacilli</taxon>
        <taxon>Bacillales</taxon>
        <taxon>Bacillaceae</taxon>
        <taxon>Bacillus</taxon>
        <taxon>Bacillus cereus group</taxon>
    </lineage>
</organism>
<evidence type="ECO:0000255" key="1">
    <source>
        <dbReference type="HAMAP-Rule" id="MF_00347"/>
    </source>
</evidence>
<gene>
    <name evidence="1" type="primary">ppk</name>
    <name type="ordered locus">BC_3993</name>
</gene>
<feature type="chain" id="PRO_0000128634" description="Polyphosphate kinase">
    <location>
        <begin position="1"/>
        <end position="702"/>
    </location>
</feature>
<feature type="active site" description="Phosphohistidine intermediate" evidence="1">
    <location>
        <position position="449"/>
    </location>
</feature>
<feature type="binding site" evidence="1">
    <location>
        <position position="55"/>
    </location>
    <ligand>
        <name>ATP</name>
        <dbReference type="ChEBI" id="CHEBI:30616"/>
    </ligand>
</feature>
<feature type="binding site" evidence="1">
    <location>
        <position position="389"/>
    </location>
    <ligand>
        <name>Mg(2+)</name>
        <dbReference type="ChEBI" id="CHEBI:18420"/>
    </ligand>
</feature>
<feature type="binding site" evidence="1">
    <location>
        <position position="419"/>
    </location>
    <ligand>
        <name>Mg(2+)</name>
        <dbReference type="ChEBI" id="CHEBI:18420"/>
    </ligand>
</feature>
<feature type="binding site" evidence="1">
    <location>
        <position position="482"/>
    </location>
    <ligand>
        <name>ATP</name>
        <dbReference type="ChEBI" id="CHEBI:30616"/>
    </ligand>
</feature>
<feature type="binding site" evidence="1">
    <location>
        <position position="578"/>
    </location>
    <ligand>
        <name>ATP</name>
        <dbReference type="ChEBI" id="CHEBI:30616"/>
    </ligand>
</feature>
<feature type="binding site" evidence="1">
    <location>
        <position position="606"/>
    </location>
    <ligand>
        <name>ATP</name>
        <dbReference type="ChEBI" id="CHEBI:30616"/>
    </ligand>
</feature>